<proteinExistence type="inferred from homology"/>
<accession>Q1QA35</accession>
<dbReference type="EC" id="1.14.99.60" evidence="1"/>
<dbReference type="EMBL" id="CP000323">
    <property type="protein sequence ID" value="ABE75468.1"/>
    <property type="molecule type" value="Genomic_DNA"/>
</dbReference>
<dbReference type="SMR" id="Q1QA35"/>
<dbReference type="STRING" id="335284.Pcryo_1691"/>
<dbReference type="KEGG" id="pcr:Pcryo_1691"/>
<dbReference type="eggNOG" id="COG2941">
    <property type="taxonomic scope" value="Bacteria"/>
</dbReference>
<dbReference type="HOGENOM" id="CLU_088601_0_0_6"/>
<dbReference type="UniPathway" id="UPA00232"/>
<dbReference type="Proteomes" id="UP000002425">
    <property type="component" value="Chromosome"/>
</dbReference>
<dbReference type="GO" id="GO:0005886">
    <property type="term" value="C:plasma membrane"/>
    <property type="evidence" value="ECO:0007669"/>
    <property type="project" value="UniProtKB-SubCell"/>
</dbReference>
<dbReference type="GO" id="GO:0008682">
    <property type="term" value="F:3-demethoxyubiquinol 3-hydroxylase activity"/>
    <property type="evidence" value="ECO:0007669"/>
    <property type="project" value="UniProtKB-EC"/>
</dbReference>
<dbReference type="GO" id="GO:0046872">
    <property type="term" value="F:metal ion binding"/>
    <property type="evidence" value="ECO:0007669"/>
    <property type="project" value="UniProtKB-KW"/>
</dbReference>
<dbReference type="GO" id="GO:0006744">
    <property type="term" value="P:ubiquinone biosynthetic process"/>
    <property type="evidence" value="ECO:0007669"/>
    <property type="project" value="UniProtKB-UniRule"/>
</dbReference>
<dbReference type="CDD" id="cd01042">
    <property type="entry name" value="DMQH"/>
    <property type="match status" value="1"/>
</dbReference>
<dbReference type="Gene3D" id="1.20.1260.10">
    <property type="match status" value="1"/>
</dbReference>
<dbReference type="HAMAP" id="MF_01658">
    <property type="entry name" value="COQ7"/>
    <property type="match status" value="1"/>
</dbReference>
<dbReference type="InterPro" id="IPR047809">
    <property type="entry name" value="COQ7_proteobact"/>
</dbReference>
<dbReference type="InterPro" id="IPR012347">
    <property type="entry name" value="Ferritin-like"/>
</dbReference>
<dbReference type="InterPro" id="IPR009078">
    <property type="entry name" value="Ferritin-like_SF"/>
</dbReference>
<dbReference type="InterPro" id="IPR011566">
    <property type="entry name" value="Ubq_synth_Coq7"/>
</dbReference>
<dbReference type="NCBIfam" id="NF033656">
    <property type="entry name" value="DMQ_monoox_COQ7"/>
    <property type="match status" value="1"/>
</dbReference>
<dbReference type="PANTHER" id="PTHR11237:SF4">
    <property type="entry name" value="5-DEMETHOXYUBIQUINONE HYDROXYLASE, MITOCHONDRIAL"/>
    <property type="match status" value="1"/>
</dbReference>
<dbReference type="PANTHER" id="PTHR11237">
    <property type="entry name" value="COENZYME Q10 BIOSYNTHESIS PROTEIN 7"/>
    <property type="match status" value="1"/>
</dbReference>
<dbReference type="Pfam" id="PF03232">
    <property type="entry name" value="COQ7"/>
    <property type="match status" value="1"/>
</dbReference>
<dbReference type="SUPFAM" id="SSF47240">
    <property type="entry name" value="Ferritin-like"/>
    <property type="match status" value="1"/>
</dbReference>
<keyword id="KW-1003">Cell membrane</keyword>
<keyword id="KW-0408">Iron</keyword>
<keyword id="KW-0472">Membrane</keyword>
<keyword id="KW-0479">Metal-binding</keyword>
<keyword id="KW-0503">Monooxygenase</keyword>
<keyword id="KW-0560">Oxidoreductase</keyword>
<keyword id="KW-0831">Ubiquinone biosynthesis</keyword>
<comment type="function">
    <text evidence="1">Catalyzes the hydroxylation of 2-nonaprenyl-3-methyl-6-methoxy-1,4-benzoquinol during ubiquinone biosynthesis.</text>
</comment>
<comment type="catalytic activity">
    <reaction evidence="1">
        <text>a 5-methoxy-2-methyl-3-(all-trans-polyprenyl)benzene-1,4-diol + AH2 + O2 = a 3-demethylubiquinol + A + H2O</text>
        <dbReference type="Rhea" id="RHEA:50908"/>
        <dbReference type="Rhea" id="RHEA-COMP:10859"/>
        <dbReference type="Rhea" id="RHEA-COMP:10914"/>
        <dbReference type="ChEBI" id="CHEBI:13193"/>
        <dbReference type="ChEBI" id="CHEBI:15377"/>
        <dbReference type="ChEBI" id="CHEBI:15379"/>
        <dbReference type="ChEBI" id="CHEBI:17499"/>
        <dbReference type="ChEBI" id="CHEBI:84167"/>
        <dbReference type="ChEBI" id="CHEBI:84422"/>
        <dbReference type="EC" id="1.14.99.60"/>
    </reaction>
</comment>
<comment type="cofactor">
    <cofactor evidence="1">
        <name>Fe cation</name>
        <dbReference type="ChEBI" id="CHEBI:24875"/>
    </cofactor>
    <text evidence="1">Binds 2 iron ions per subunit.</text>
</comment>
<comment type="pathway">
    <text evidence="1">Cofactor biosynthesis; ubiquinone biosynthesis.</text>
</comment>
<comment type="subcellular location">
    <subcellularLocation>
        <location evidence="1">Cell membrane</location>
        <topology evidence="1">Peripheral membrane protein</topology>
    </subcellularLocation>
</comment>
<comment type="similarity">
    <text evidence="1">Belongs to the COQ7 family.</text>
</comment>
<feature type="chain" id="PRO_0000338723" description="3-demethoxyubiquinol 3-hydroxylase">
    <location>
        <begin position="1"/>
        <end position="214"/>
    </location>
</feature>
<feature type="binding site" evidence="1">
    <location>
        <position position="63"/>
    </location>
    <ligand>
        <name>Fe cation</name>
        <dbReference type="ChEBI" id="CHEBI:24875"/>
        <label>1</label>
    </ligand>
</feature>
<feature type="binding site" evidence="1">
    <location>
        <position position="93"/>
    </location>
    <ligand>
        <name>Fe cation</name>
        <dbReference type="ChEBI" id="CHEBI:24875"/>
        <label>1</label>
    </ligand>
</feature>
<feature type="binding site" evidence="1">
    <location>
        <position position="93"/>
    </location>
    <ligand>
        <name>Fe cation</name>
        <dbReference type="ChEBI" id="CHEBI:24875"/>
        <label>2</label>
    </ligand>
</feature>
<feature type="binding site" evidence="1">
    <location>
        <position position="96"/>
    </location>
    <ligand>
        <name>Fe cation</name>
        <dbReference type="ChEBI" id="CHEBI:24875"/>
        <label>1</label>
    </ligand>
</feature>
<feature type="binding site" evidence="1">
    <location>
        <position position="145"/>
    </location>
    <ligand>
        <name>Fe cation</name>
        <dbReference type="ChEBI" id="CHEBI:24875"/>
        <label>2</label>
    </ligand>
</feature>
<feature type="binding site" evidence="1">
    <location>
        <position position="177"/>
    </location>
    <ligand>
        <name>Fe cation</name>
        <dbReference type="ChEBI" id="CHEBI:24875"/>
        <label>1</label>
    </ligand>
</feature>
<feature type="binding site" evidence="1">
    <location>
        <position position="177"/>
    </location>
    <ligand>
        <name>Fe cation</name>
        <dbReference type="ChEBI" id="CHEBI:24875"/>
        <label>2</label>
    </ligand>
</feature>
<feature type="binding site" evidence="1">
    <location>
        <position position="180"/>
    </location>
    <ligand>
        <name>Fe cation</name>
        <dbReference type="ChEBI" id="CHEBI:24875"/>
        <label>2</label>
    </ligand>
</feature>
<reference key="1">
    <citation type="submission" date="2006-03" db="EMBL/GenBank/DDBJ databases">
        <title>Complete sequence of chromosome of Psychrobacter cryohalolentis K5.</title>
        <authorList>
            <consortium name="US DOE Joint Genome Institute"/>
            <person name="Copeland A."/>
            <person name="Lucas S."/>
            <person name="Lapidus A."/>
            <person name="Barry K."/>
            <person name="Detter J.C."/>
            <person name="Glavina T."/>
            <person name="Hammon N."/>
            <person name="Israni S."/>
            <person name="Dalin E."/>
            <person name="Tice H."/>
            <person name="Pitluck S."/>
            <person name="Brettin T."/>
            <person name="Bruce D."/>
            <person name="Han C."/>
            <person name="Tapia R."/>
            <person name="Sims D.R."/>
            <person name="Gilna P."/>
            <person name="Schmutz J."/>
            <person name="Larimer F."/>
            <person name="Land M."/>
            <person name="Hauser L."/>
            <person name="Kyrpides N."/>
            <person name="Kim E."/>
            <person name="Richardson P."/>
        </authorList>
    </citation>
    <scope>NUCLEOTIDE SEQUENCE [LARGE SCALE GENOMIC DNA]</scope>
    <source>
        <strain>ATCC BAA-1226 / DSM 17306 / VKM B-2378 / K5</strain>
    </source>
</reference>
<sequence>MALRSLSKIDQLLLGVDKALRAVVPHSNPSTRPLPVSSDEIPELSITESRHVAGLMRINHTGEVCAQGLYHGQAFTAKDNSVKRAMQQSAEEEVDHLVWCETRLSELGSHPSVFTPLWYGMSFGLGAVAGAISNEFSLGFVAETEAQVSEHLQDHIGQLPPQDQRSKEILAQMDSEELHHRELALANGGAALSPLMRHTMRWMANRMKATAYHF</sequence>
<name>COQ7_PSYCK</name>
<gene>
    <name evidence="1" type="primary">coq7</name>
    <name type="ordered locus">Pcryo_1691</name>
</gene>
<organism>
    <name type="scientific">Psychrobacter cryohalolentis (strain ATCC BAA-1226 / DSM 17306 / VKM B-2378 / K5)</name>
    <dbReference type="NCBI Taxonomy" id="335284"/>
    <lineage>
        <taxon>Bacteria</taxon>
        <taxon>Pseudomonadati</taxon>
        <taxon>Pseudomonadota</taxon>
        <taxon>Gammaproteobacteria</taxon>
        <taxon>Moraxellales</taxon>
        <taxon>Moraxellaceae</taxon>
        <taxon>Psychrobacter</taxon>
    </lineage>
</organism>
<protein>
    <recommendedName>
        <fullName evidence="1">3-demethoxyubiquinol 3-hydroxylase</fullName>
        <shortName evidence="1">DMQ hydroxylase</shortName>
        <ecNumber evidence="1">1.14.99.60</ecNumber>
    </recommendedName>
    <alternativeName>
        <fullName evidence="1">2-nonaprenyl-3-methyl-6-methoxy-1,4-benzoquinol hydroxylase</fullName>
    </alternativeName>
</protein>
<evidence type="ECO:0000255" key="1">
    <source>
        <dbReference type="HAMAP-Rule" id="MF_01658"/>
    </source>
</evidence>